<comment type="function">
    <text evidence="1">Catalyzes the NADPH-dependent reduction of 7-cyano-7-deazaguanine (preQ0) to 7-aminomethyl-7-deazaguanine (preQ1).</text>
</comment>
<comment type="catalytic activity">
    <reaction evidence="1">
        <text>7-aminomethyl-7-carbaguanine + 2 NADP(+) = 7-cyano-7-deazaguanine + 2 NADPH + 3 H(+)</text>
        <dbReference type="Rhea" id="RHEA:13409"/>
        <dbReference type="ChEBI" id="CHEBI:15378"/>
        <dbReference type="ChEBI" id="CHEBI:45075"/>
        <dbReference type="ChEBI" id="CHEBI:57783"/>
        <dbReference type="ChEBI" id="CHEBI:58349"/>
        <dbReference type="ChEBI" id="CHEBI:58703"/>
        <dbReference type="EC" id="1.7.1.13"/>
    </reaction>
</comment>
<comment type="pathway">
    <text evidence="1">tRNA modification; tRNA-queuosine biosynthesis.</text>
</comment>
<comment type="subcellular location">
    <subcellularLocation>
        <location evidence="1">Cytoplasm</location>
    </subcellularLocation>
</comment>
<comment type="similarity">
    <text evidence="1">Belongs to the GTP cyclohydrolase I family. QueF type 1 subfamily.</text>
</comment>
<name>QUEF_SYNAS</name>
<reference key="1">
    <citation type="journal article" date="2007" name="Proc. Natl. Acad. Sci. U.S.A.">
        <title>The genome of Syntrophus aciditrophicus: life at the thermodynamic limit of microbial growth.</title>
        <authorList>
            <person name="McInerney M.J."/>
            <person name="Rohlin L."/>
            <person name="Mouttaki H."/>
            <person name="Kim U."/>
            <person name="Krupp R.S."/>
            <person name="Rios-Hernandez L."/>
            <person name="Sieber J."/>
            <person name="Struchtemeyer C.G."/>
            <person name="Bhattacharyya A."/>
            <person name="Campbell J.W."/>
            <person name="Gunsalus R.P."/>
        </authorList>
    </citation>
    <scope>NUCLEOTIDE SEQUENCE [LARGE SCALE GENOMIC DNA]</scope>
    <source>
        <strain>SB</strain>
    </source>
</reference>
<protein>
    <recommendedName>
        <fullName evidence="1">NADPH-dependent 7-cyano-7-deazaguanine reductase</fullName>
        <ecNumber evidence="1">1.7.1.13</ecNumber>
    </recommendedName>
    <alternativeName>
        <fullName evidence="1">7-cyano-7-carbaguanine reductase</fullName>
    </alternativeName>
    <alternativeName>
        <fullName evidence="1">NADPH-dependent nitrile oxidoreductase</fullName>
    </alternativeName>
    <alternativeName>
        <fullName evidence="1">PreQ(0) reductase</fullName>
    </alternativeName>
</protein>
<dbReference type="EC" id="1.7.1.13" evidence="1"/>
<dbReference type="EMBL" id="CP000252">
    <property type="protein sequence ID" value="ABC77397.1"/>
    <property type="molecule type" value="Genomic_DNA"/>
</dbReference>
<dbReference type="RefSeq" id="WP_011417419.1">
    <property type="nucleotide sequence ID" value="NC_007759.1"/>
</dbReference>
<dbReference type="SMR" id="Q2LTJ0"/>
<dbReference type="STRING" id="56780.SYN_01967"/>
<dbReference type="KEGG" id="sat:SYN_01967"/>
<dbReference type="eggNOG" id="COG0780">
    <property type="taxonomic scope" value="Bacteria"/>
</dbReference>
<dbReference type="HOGENOM" id="CLU_102489_1_0_7"/>
<dbReference type="InParanoid" id="Q2LTJ0"/>
<dbReference type="OrthoDB" id="9789995at2"/>
<dbReference type="UniPathway" id="UPA00392"/>
<dbReference type="Proteomes" id="UP000001933">
    <property type="component" value="Chromosome"/>
</dbReference>
<dbReference type="GO" id="GO:0005737">
    <property type="term" value="C:cytoplasm"/>
    <property type="evidence" value="ECO:0007669"/>
    <property type="project" value="UniProtKB-SubCell"/>
</dbReference>
<dbReference type="GO" id="GO:0033739">
    <property type="term" value="F:preQ1 synthase activity"/>
    <property type="evidence" value="ECO:0007669"/>
    <property type="project" value="UniProtKB-UniRule"/>
</dbReference>
<dbReference type="GO" id="GO:0008616">
    <property type="term" value="P:queuosine biosynthetic process"/>
    <property type="evidence" value="ECO:0007669"/>
    <property type="project" value="UniProtKB-UniRule"/>
</dbReference>
<dbReference type="GO" id="GO:0006400">
    <property type="term" value="P:tRNA modification"/>
    <property type="evidence" value="ECO:0007669"/>
    <property type="project" value="UniProtKB-UniRule"/>
</dbReference>
<dbReference type="Gene3D" id="3.30.1130.10">
    <property type="match status" value="1"/>
</dbReference>
<dbReference type="HAMAP" id="MF_00818">
    <property type="entry name" value="QueF_type1"/>
    <property type="match status" value="1"/>
</dbReference>
<dbReference type="InterPro" id="IPR043133">
    <property type="entry name" value="GTP-CH-I_C/QueF"/>
</dbReference>
<dbReference type="InterPro" id="IPR050084">
    <property type="entry name" value="NADPH_dep_7-cyano-7-deazaG_red"/>
</dbReference>
<dbReference type="InterPro" id="IPR029500">
    <property type="entry name" value="QueF"/>
</dbReference>
<dbReference type="InterPro" id="IPR016856">
    <property type="entry name" value="QueF_type1"/>
</dbReference>
<dbReference type="NCBIfam" id="TIGR03139">
    <property type="entry name" value="QueF-II"/>
    <property type="match status" value="1"/>
</dbReference>
<dbReference type="PANTHER" id="PTHR34354">
    <property type="entry name" value="NADPH-DEPENDENT 7-CYANO-7-DEAZAGUANINE REDUCTASE"/>
    <property type="match status" value="1"/>
</dbReference>
<dbReference type="PANTHER" id="PTHR34354:SF1">
    <property type="entry name" value="NADPH-DEPENDENT 7-CYANO-7-DEAZAGUANINE REDUCTASE"/>
    <property type="match status" value="1"/>
</dbReference>
<dbReference type="Pfam" id="PF14489">
    <property type="entry name" value="QueF"/>
    <property type="match status" value="1"/>
</dbReference>
<dbReference type="PIRSF" id="PIRSF027377">
    <property type="entry name" value="Nitrile_oxidored_QueF"/>
    <property type="match status" value="1"/>
</dbReference>
<dbReference type="SUPFAM" id="SSF55620">
    <property type="entry name" value="Tetrahydrobiopterin biosynthesis enzymes-like"/>
    <property type="match status" value="1"/>
</dbReference>
<gene>
    <name evidence="1" type="primary">queF</name>
    <name type="ordered locus">SYNAS_15180</name>
    <name type="ORF">SYN_01967</name>
</gene>
<keyword id="KW-0963">Cytoplasm</keyword>
<keyword id="KW-0521">NADP</keyword>
<keyword id="KW-0560">Oxidoreductase</keyword>
<keyword id="KW-0671">Queuosine biosynthesis</keyword>
<keyword id="KW-1185">Reference proteome</keyword>
<evidence type="ECO:0000255" key="1">
    <source>
        <dbReference type="HAMAP-Rule" id="MF_00818"/>
    </source>
</evidence>
<sequence>MQKSTPPEDLSRLTLLGREAKPSRKLETFPNRHPDRDYIVTMETAEFTCVCPMTGQPDFADLHISYIPDASILESKSLKLYLWSYRNEGIFHEHVTNVILEDVVAALSPRWCKVTANFGVRGGISITVEAEYKKPGWSKP</sequence>
<organism>
    <name type="scientific">Syntrophus aciditrophicus (strain SB)</name>
    <dbReference type="NCBI Taxonomy" id="56780"/>
    <lineage>
        <taxon>Bacteria</taxon>
        <taxon>Pseudomonadati</taxon>
        <taxon>Thermodesulfobacteriota</taxon>
        <taxon>Syntrophia</taxon>
        <taxon>Syntrophales</taxon>
        <taxon>Syntrophaceae</taxon>
        <taxon>Syntrophus</taxon>
    </lineage>
</organism>
<feature type="chain" id="PRO_0000247699" description="NADPH-dependent 7-cyano-7-deazaguanine reductase">
    <location>
        <begin position="1"/>
        <end position="140"/>
    </location>
</feature>
<feature type="active site" description="Thioimide intermediate" evidence="1">
    <location>
        <position position="51"/>
    </location>
</feature>
<feature type="active site" description="Proton donor" evidence="1">
    <location>
        <position position="58"/>
    </location>
</feature>
<feature type="binding site" evidence="1">
    <location>
        <begin position="73"/>
        <end position="75"/>
    </location>
    <ligand>
        <name>substrate</name>
    </ligand>
</feature>
<feature type="binding site" evidence="1">
    <location>
        <begin position="92"/>
        <end position="93"/>
    </location>
    <ligand>
        <name>substrate</name>
    </ligand>
</feature>
<proteinExistence type="inferred from homology"/>
<accession>Q2LTJ0</accession>